<accession>P0C357</accession>
<accession>P12156</accession>
<accession>Q6QXU8</accession>
<accession>Q6QY75</accession>
<organism>
    <name type="scientific">Oryza sativa subsp. indica</name>
    <name type="common">Rice</name>
    <dbReference type="NCBI Taxonomy" id="39946"/>
    <lineage>
        <taxon>Eukaryota</taxon>
        <taxon>Viridiplantae</taxon>
        <taxon>Streptophyta</taxon>
        <taxon>Embryophyta</taxon>
        <taxon>Tracheophyta</taxon>
        <taxon>Spermatophyta</taxon>
        <taxon>Magnoliopsida</taxon>
        <taxon>Liliopsida</taxon>
        <taxon>Poales</taxon>
        <taxon>Poaceae</taxon>
        <taxon>BOP clade</taxon>
        <taxon>Oryzoideae</taxon>
        <taxon>Oryzeae</taxon>
        <taxon>Oryzinae</taxon>
        <taxon>Oryza</taxon>
        <taxon>Oryza sativa</taxon>
    </lineage>
</organism>
<dbReference type="EC" id="1.97.1.12" evidence="1"/>
<dbReference type="EMBL" id="AY522329">
    <property type="protein sequence ID" value="AAS46054.1"/>
    <property type="status" value="ALT_INIT"/>
    <property type="molecule type" value="Genomic_DNA"/>
</dbReference>
<dbReference type="RefSeq" id="YP_009161363.1">
    <property type="nucleotide sequence ID" value="NC_027678.1"/>
</dbReference>
<dbReference type="RefSeq" id="YP_654214.1">
    <property type="nucleotide sequence ID" value="NC_008155.1"/>
</dbReference>
<dbReference type="SMR" id="P0C357"/>
<dbReference type="STRING" id="39946.P0C357"/>
<dbReference type="GeneID" id="4126884"/>
<dbReference type="Proteomes" id="UP000007015">
    <property type="component" value="Chloroplast"/>
</dbReference>
<dbReference type="GO" id="GO:0009535">
    <property type="term" value="C:chloroplast thylakoid membrane"/>
    <property type="evidence" value="ECO:0007669"/>
    <property type="project" value="UniProtKB-SubCell"/>
</dbReference>
<dbReference type="GO" id="GO:0009522">
    <property type="term" value="C:photosystem I"/>
    <property type="evidence" value="ECO:0007669"/>
    <property type="project" value="UniProtKB-KW"/>
</dbReference>
<dbReference type="GO" id="GO:0009536">
    <property type="term" value="C:plastid"/>
    <property type="evidence" value="ECO:0000305"/>
    <property type="project" value="Gramene"/>
</dbReference>
<dbReference type="GO" id="GO:0051539">
    <property type="term" value="F:4 iron, 4 sulfur cluster binding"/>
    <property type="evidence" value="ECO:0007669"/>
    <property type="project" value="UniProtKB-KW"/>
</dbReference>
<dbReference type="GO" id="GO:0016168">
    <property type="term" value="F:chlorophyll binding"/>
    <property type="evidence" value="ECO:0007669"/>
    <property type="project" value="UniProtKB-KW"/>
</dbReference>
<dbReference type="GO" id="GO:0009055">
    <property type="term" value="F:electron transfer activity"/>
    <property type="evidence" value="ECO:0007669"/>
    <property type="project" value="UniProtKB-UniRule"/>
</dbReference>
<dbReference type="GO" id="GO:0000287">
    <property type="term" value="F:magnesium ion binding"/>
    <property type="evidence" value="ECO:0007669"/>
    <property type="project" value="UniProtKB-UniRule"/>
</dbReference>
<dbReference type="GO" id="GO:0016491">
    <property type="term" value="F:oxidoreductase activity"/>
    <property type="evidence" value="ECO:0007669"/>
    <property type="project" value="UniProtKB-KW"/>
</dbReference>
<dbReference type="GO" id="GO:0015979">
    <property type="term" value="P:photosynthesis"/>
    <property type="evidence" value="ECO:0007669"/>
    <property type="project" value="UniProtKB-UniRule"/>
</dbReference>
<dbReference type="FunFam" id="1.20.1130.10:FF:000001">
    <property type="entry name" value="Photosystem I P700 chlorophyll a apoprotein A2"/>
    <property type="match status" value="1"/>
</dbReference>
<dbReference type="Gene3D" id="1.20.1130.10">
    <property type="entry name" value="Photosystem I PsaA/PsaB"/>
    <property type="match status" value="1"/>
</dbReference>
<dbReference type="HAMAP" id="MF_00482">
    <property type="entry name" value="PSI_PsaB"/>
    <property type="match status" value="1"/>
</dbReference>
<dbReference type="InterPro" id="IPR001280">
    <property type="entry name" value="PSI_PsaA/B"/>
</dbReference>
<dbReference type="InterPro" id="IPR020586">
    <property type="entry name" value="PSI_PsaA/B_CS"/>
</dbReference>
<dbReference type="InterPro" id="IPR036408">
    <property type="entry name" value="PSI_PsaA/B_sf"/>
</dbReference>
<dbReference type="InterPro" id="IPR006244">
    <property type="entry name" value="PSI_PsaB"/>
</dbReference>
<dbReference type="NCBIfam" id="TIGR01336">
    <property type="entry name" value="psaB"/>
    <property type="match status" value="1"/>
</dbReference>
<dbReference type="PANTHER" id="PTHR30128">
    <property type="entry name" value="OUTER MEMBRANE PROTEIN, OMPA-RELATED"/>
    <property type="match status" value="1"/>
</dbReference>
<dbReference type="PANTHER" id="PTHR30128:SF19">
    <property type="entry name" value="PHOTOSYSTEM I P700 CHLOROPHYLL A APOPROTEIN A1-RELATED"/>
    <property type="match status" value="1"/>
</dbReference>
<dbReference type="Pfam" id="PF00223">
    <property type="entry name" value="PsaA_PsaB"/>
    <property type="match status" value="1"/>
</dbReference>
<dbReference type="PIRSF" id="PIRSF002905">
    <property type="entry name" value="PSI_A"/>
    <property type="match status" value="1"/>
</dbReference>
<dbReference type="PRINTS" id="PR00257">
    <property type="entry name" value="PHOTSYSPSAAB"/>
</dbReference>
<dbReference type="SUPFAM" id="SSF81558">
    <property type="entry name" value="Photosystem I subunits PsaA/PsaB"/>
    <property type="match status" value="1"/>
</dbReference>
<dbReference type="PROSITE" id="PS00419">
    <property type="entry name" value="PHOTOSYSTEM_I_PSAAB"/>
    <property type="match status" value="1"/>
</dbReference>
<evidence type="ECO:0000255" key="1">
    <source>
        <dbReference type="HAMAP-Rule" id="MF_00482"/>
    </source>
</evidence>
<evidence type="ECO:0000305" key="2"/>
<reference key="1">
    <citation type="journal article" date="2004" name="Plant Physiol.">
        <title>A comparison of rice chloroplast genomes.</title>
        <authorList>
            <person name="Tang J."/>
            <person name="Xia H."/>
            <person name="Cao M."/>
            <person name="Zhang X."/>
            <person name="Zeng W."/>
            <person name="Hu S."/>
            <person name="Tong W."/>
            <person name="Wang J."/>
            <person name="Wang J."/>
            <person name="Yu J."/>
            <person name="Yang H."/>
            <person name="Zhu L."/>
        </authorList>
    </citation>
    <scope>NUCLEOTIDE SEQUENCE [LARGE SCALE GENOMIC DNA]</scope>
    <source>
        <strain>cv. 93-11</strain>
    </source>
</reference>
<keyword id="KW-0004">4Fe-4S</keyword>
<keyword id="KW-0148">Chlorophyll</keyword>
<keyword id="KW-0150">Chloroplast</keyword>
<keyword id="KW-0157">Chromophore</keyword>
<keyword id="KW-0249">Electron transport</keyword>
<keyword id="KW-0408">Iron</keyword>
<keyword id="KW-0411">Iron-sulfur</keyword>
<keyword id="KW-0460">Magnesium</keyword>
<keyword id="KW-0472">Membrane</keyword>
<keyword id="KW-0479">Metal-binding</keyword>
<keyword id="KW-0560">Oxidoreductase</keyword>
<keyword id="KW-0602">Photosynthesis</keyword>
<keyword id="KW-0603">Photosystem I</keyword>
<keyword id="KW-0934">Plastid</keyword>
<keyword id="KW-1185">Reference proteome</keyword>
<keyword id="KW-0793">Thylakoid</keyword>
<keyword id="KW-0812">Transmembrane</keyword>
<keyword id="KW-1133">Transmembrane helix</keyword>
<keyword id="KW-0813">Transport</keyword>
<comment type="function">
    <text evidence="1">PsaA and PsaB bind P700, the primary electron donor of photosystem I (PSI), as well as the electron acceptors A0, A1 and FX. PSI is a plastocyanin-ferredoxin oxidoreductase, converting photonic excitation into a charge separation, which transfers an electron from the donor P700 chlorophyll pair to the spectroscopically characterized acceptors A0, A1, FX, FA and FB in turn. Oxidized P700 is reduced on the lumenal side of the thylakoid membrane by plastocyanin.</text>
</comment>
<comment type="catalytic activity">
    <reaction evidence="1">
        <text>reduced [plastocyanin] + hnu + oxidized [2Fe-2S]-[ferredoxin] = oxidized [plastocyanin] + reduced [2Fe-2S]-[ferredoxin]</text>
        <dbReference type="Rhea" id="RHEA:30407"/>
        <dbReference type="Rhea" id="RHEA-COMP:10000"/>
        <dbReference type="Rhea" id="RHEA-COMP:10001"/>
        <dbReference type="Rhea" id="RHEA-COMP:10039"/>
        <dbReference type="Rhea" id="RHEA-COMP:10040"/>
        <dbReference type="ChEBI" id="CHEBI:29036"/>
        <dbReference type="ChEBI" id="CHEBI:30212"/>
        <dbReference type="ChEBI" id="CHEBI:33737"/>
        <dbReference type="ChEBI" id="CHEBI:33738"/>
        <dbReference type="ChEBI" id="CHEBI:49552"/>
        <dbReference type="EC" id="1.97.1.12"/>
    </reaction>
</comment>
<comment type="cofactor">
    <text evidence="1">P700 is a chlorophyll a/chlorophyll a' dimer, A0 is one or more chlorophyll a, A1 is one or both phylloquinones and FX is a shared 4Fe-4S iron-sulfur center.</text>
</comment>
<comment type="subunit">
    <text evidence="1">The PsaA/B heterodimer binds the P700 chlorophyll special pair and subsequent electron acceptors. PSI consists of a core antenna complex that captures photons, and an electron transfer chain that converts photonic excitation into a charge separation. The eukaryotic PSI reaction center is composed of at least 11 subunits.</text>
</comment>
<comment type="subcellular location">
    <subcellularLocation>
        <location evidence="1">Plastid</location>
        <location evidence="1">Chloroplast thylakoid membrane</location>
        <topology evidence="1">Multi-pass membrane protein</topology>
    </subcellularLocation>
</comment>
<comment type="similarity">
    <text evidence="1">Belongs to the PsaA/PsaB family.</text>
</comment>
<comment type="sequence caution" evidence="2">
    <conflict type="erroneous initiation">
        <sequence resource="EMBL-CDS" id="AAS46054"/>
    </conflict>
</comment>
<feature type="chain" id="PRO_0000288984" description="Photosystem I P700 chlorophyll a apoprotein A2">
    <location>
        <begin position="1"/>
        <end position="734"/>
    </location>
</feature>
<feature type="transmembrane region" description="Helical; Name=I" evidence="1">
    <location>
        <begin position="46"/>
        <end position="69"/>
    </location>
</feature>
<feature type="transmembrane region" description="Helical; Name=II" evidence="1">
    <location>
        <begin position="135"/>
        <end position="158"/>
    </location>
</feature>
<feature type="transmembrane region" description="Helical; Name=III" evidence="1">
    <location>
        <begin position="175"/>
        <end position="199"/>
    </location>
</feature>
<feature type="transmembrane region" description="Helical; Name=IV" evidence="1">
    <location>
        <begin position="273"/>
        <end position="291"/>
    </location>
</feature>
<feature type="transmembrane region" description="Helical; Name=V" evidence="1">
    <location>
        <begin position="330"/>
        <end position="353"/>
    </location>
</feature>
<feature type="transmembrane region" description="Helical; Name=VI" evidence="1">
    <location>
        <begin position="369"/>
        <end position="395"/>
    </location>
</feature>
<feature type="transmembrane region" description="Helical; Name=VII" evidence="1">
    <location>
        <begin position="417"/>
        <end position="439"/>
    </location>
</feature>
<feature type="transmembrane region" description="Helical; Name=VIII" evidence="1">
    <location>
        <begin position="517"/>
        <end position="535"/>
    </location>
</feature>
<feature type="transmembrane region" description="Helical; Name=IX" evidence="1">
    <location>
        <begin position="575"/>
        <end position="596"/>
    </location>
</feature>
<feature type="transmembrane region" description="Helical; Name=X" evidence="1">
    <location>
        <begin position="643"/>
        <end position="665"/>
    </location>
</feature>
<feature type="transmembrane region" description="Helical; Name=XI" evidence="1">
    <location>
        <begin position="707"/>
        <end position="727"/>
    </location>
</feature>
<feature type="binding site" evidence="1">
    <location>
        <position position="559"/>
    </location>
    <ligand>
        <name>[4Fe-4S] cluster</name>
        <dbReference type="ChEBI" id="CHEBI:49883"/>
        <note>ligand shared between dimeric partners</note>
    </ligand>
</feature>
<feature type="binding site" evidence="1">
    <location>
        <position position="568"/>
    </location>
    <ligand>
        <name>[4Fe-4S] cluster</name>
        <dbReference type="ChEBI" id="CHEBI:49883"/>
        <note>ligand shared between dimeric partners</note>
    </ligand>
</feature>
<feature type="binding site" description="axial binding residue" evidence="1">
    <location>
        <position position="654"/>
    </location>
    <ligand>
        <name>chlorophyll a</name>
        <dbReference type="ChEBI" id="CHEBI:58416"/>
        <label>B1</label>
    </ligand>
    <ligandPart>
        <name>Mg</name>
        <dbReference type="ChEBI" id="CHEBI:25107"/>
    </ligandPart>
</feature>
<feature type="binding site" description="axial binding residue" evidence="1">
    <location>
        <position position="662"/>
    </location>
    <ligand>
        <name>chlorophyll a</name>
        <dbReference type="ChEBI" id="CHEBI:58416"/>
        <label>B3</label>
    </ligand>
    <ligandPart>
        <name>Mg</name>
        <dbReference type="ChEBI" id="CHEBI:25107"/>
    </ligandPart>
</feature>
<feature type="binding site" evidence="1">
    <location>
        <position position="670"/>
    </location>
    <ligand>
        <name>chlorophyll a</name>
        <dbReference type="ChEBI" id="CHEBI:58416"/>
        <label>B3</label>
    </ligand>
</feature>
<feature type="binding site" evidence="1">
    <location>
        <position position="671"/>
    </location>
    <ligand>
        <name>phylloquinone</name>
        <dbReference type="ChEBI" id="CHEBI:18067"/>
        <label>B</label>
    </ligand>
</feature>
<name>PSAB_ORYSI</name>
<proteinExistence type="inferred from homology"/>
<gene>
    <name evidence="1" type="primary">psaB</name>
    <name type="ORF">9311047</name>
</gene>
<geneLocation type="chloroplast"/>
<sequence length="734" mass="82560">MELRFPRFSQGLAQDPTTRRIWFGIATAHDFESHDDITEERLYQNIFASHFGQLAIIFLWTSGNLFHVAWQGNFESWIQDPLHVRPIAHAIWDPHFGQPAVEAFTRGGAAGPVNIAYSGVYQWWYTIGLRTNEDLYTGALFLLFLSTLSLIGGWLHLQPKWKPSLSWFKNAESRLNHHLSGLFGVSSLAWTGHLVHVAIPASRGEYVRWNNFLDVLPYPQGLGPLLTGQWNLYAQNPDSSNHLFGTTQGAGTAILTLLGGFHPQTQSLWLTDIAHHHLAIAFIFLIAGHMYRTNFGIGHSIKDLLEAHTPPGGRLGRGHKGLYDTINNSIHFQLGLALASLGVITSLVAQHMYSLPSYAFIAQDFTTQAALYTHHQYIAGFIMTGAFAHGAIFFIRDYNPEQNEDNVLARMLDHKEAIISHLSWASLFLGFHTLGLYVHNDVMLAFGTPEKQILIEPIFAQWIQSAHGKTTYGFDILLSSTSGPAFNAGRTLWLPGWLNAVNENSNSLFLTIGPGDFLVHHAIALGLHTTTLILVKGALDARGSKLMPDKKDFGYSFPCDGPGRGGTCDISAWDAFYLAVFWMLNTIGWVTFYWHWKHITLWQGNVSQFNESSTYLMGWLRDYLWLNSSQLINGYNPFGMNSLSVWAWMFLFGHLVWATGFMFLISWRGYWQELIETLAWAHERTPLANLIRWRDKPVALSIVQARLVGLAHFSVGYIFTYAAFLIASTSGKFG</sequence>
<protein>
    <recommendedName>
        <fullName evidence="1">Photosystem I P700 chlorophyll a apoprotein A2</fullName>
        <ecNumber evidence="1">1.97.1.12</ecNumber>
    </recommendedName>
    <alternativeName>
        <fullName evidence="1">PSI-B</fullName>
    </alternativeName>
    <alternativeName>
        <fullName evidence="1">PsaB</fullName>
    </alternativeName>
</protein>